<sequence length="8" mass="1022">QLNYSPDW</sequence>
<reference key="1">
    <citation type="journal article" date="1991" name="Biochem. J.">
        <title>A unique charged tyrosine-containing member of the adipokinetic hormone/red-pigment-concentrating hormone peptide family isolated and sequenced from two beetle species.</title>
        <authorList>
            <person name="Gaede G."/>
        </authorList>
    </citation>
    <scope>PROTEIN SEQUENCE</scope>
    <scope>PYROGLUTAMATE FORMATION AT GLN-1</scope>
    <scope>AMIDATION AT TRP-8</scope>
    <scope>SUBCELLULAR LOCATION</scope>
    <source>
        <tissue>Corpora cardiaca</tissue>
    </source>
</reference>
<dbReference type="PIR" id="S15422">
    <property type="entry name" value="S15422"/>
</dbReference>
<dbReference type="GO" id="GO:0005576">
    <property type="term" value="C:extracellular region"/>
    <property type="evidence" value="ECO:0007669"/>
    <property type="project" value="UniProtKB-SubCell"/>
</dbReference>
<dbReference type="GO" id="GO:0005179">
    <property type="term" value="F:hormone activity"/>
    <property type="evidence" value="ECO:0007669"/>
    <property type="project" value="UniProtKB-KW"/>
</dbReference>
<dbReference type="GO" id="GO:0007629">
    <property type="term" value="P:flight behavior"/>
    <property type="evidence" value="ECO:0007669"/>
    <property type="project" value="UniProtKB-KW"/>
</dbReference>
<dbReference type="GO" id="GO:0007218">
    <property type="term" value="P:neuropeptide signaling pathway"/>
    <property type="evidence" value="ECO:0007669"/>
    <property type="project" value="UniProtKB-KW"/>
</dbReference>
<dbReference type="InterPro" id="IPR002047">
    <property type="entry name" value="Adipokinetic_hormone_CS"/>
</dbReference>
<dbReference type="PROSITE" id="PS00256">
    <property type="entry name" value="AKH"/>
    <property type="match status" value="1"/>
</dbReference>
<evidence type="ECO:0000269" key="1">
    <source>
    </source>
</evidence>
<evidence type="ECO:0000305" key="2"/>
<proteinExistence type="evidence at protein level"/>
<comment type="function">
    <text>This hormone, released from cells in the corpora cardiaca, causes release of diglycerides from the fat body and stimulation of muscles to use these diglycerides as an energy source during energy-demanding processes.</text>
</comment>
<comment type="subcellular location">
    <subcellularLocation>
        <location evidence="1">Secreted</location>
    </subcellularLocation>
</comment>
<comment type="similarity">
    <text evidence="2">Belongs to the AKH/HRTH/RPCH family.</text>
</comment>
<keyword id="KW-0027">Amidation</keyword>
<keyword id="KW-0903">Direct protein sequencing</keyword>
<keyword id="KW-0286">Flight</keyword>
<keyword id="KW-0372">Hormone</keyword>
<keyword id="KW-0527">Neuropeptide</keyword>
<keyword id="KW-0873">Pyrrolidone carboxylic acid</keyword>
<keyword id="KW-0964">Secreted</keyword>
<feature type="peptide" id="PRO_0000043422" description="Adipokinetic hormone">
    <location>
        <begin position="1"/>
        <end position="8"/>
    </location>
</feature>
<feature type="modified residue" description="Pyrrolidone carboxylic acid" evidence="1">
    <location>
        <position position="1"/>
    </location>
</feature>
<feature type="modified residue" description="Tryptophan amide" evidence="1">
    <location>
        <position position="8"/>
    </location>
</feature>
<name>AKH_MELML</name>
<accession>P84240</accession>
<accession>P25423</accession>
<protein>
    <recommendedName>
        <fullName>Adipokinetic hormone</fullName>
        <shortName>AKH</shortName>
    </recommendedName>
</protein>
<organism>
    <name type="scientific">Melolontha melolontha</name>
    <name type="common">Cockchafer</name>
    <dbReference type="NCBI Taxonomy" id="7061"/>
    <lineage>
        <taxon>Eukaryota</taxon>
        <taxon>Metazoa</taxon>
        <taxon>Ecdysozoa</taxon>
        <taxon>Arthropoda</taxon>
        <taxon>Hexapoda</taxon>
        <taxon>Insecta</taxon>
        <taxon>Pterygota</taxon>
        <taxon>Neoptera</taxon>
        <taxon>Endopterygota</taxon>
        <taxon>Coleoptera</taxon>
        <taxon>Polyphaga</taxon>
        <taxon>Scarabaeiformia</taxon>
        <taxon>Scarabaeidae</taxon>
        <taxon>Melolonthinae</taxon>
        <taxon>Melolontha</taxon>
    </lineage>
</organism>